<name>BEPA_SALTI</name>
<dbReference type="EC" id="3.4.-.-" evidence="1"/>
<dbReference type="EMBL" id="AL513382">
    <property type="protein sequence ID" value="CAD02696.1"/>
    <property type="molecule type" value="Genomic_DNA"/>
</dbReference>
<dbReference type="EMBL" id="AE014613">
    <property type="protein sequence ID" value="AAO68082.1"/>
    <property type="molecule type" value="Genomic_DNA"/>
</dbReference>
<dbReference type="RefSeq" id="NP_457029.1">
    <property type="nucleotide sequence ID" value="NC_003198.1"/>
</dbReference>
<dbReference type="RefSeq" id="WP_000489630.1">
    <property type="nucleotide sequence ID" value="NZ_WSUR01000007.1"/>
</dbReference>
<dbReference type="SMR" id="P66951"/>
<dbReference type="STRING" id="220341.gene:17586630"/>
<dbReference type="MEROPS" id="M48.023"/>
<dbReference type="KEGG" id="stt:t0363"/>
<dbReference type="KEGG" id="sty:STY2735"/>
<dbReference type="PATRIC" id="fig|220341.7.peg.2773"/>
<dbReference type="eggNOG" id="COG4783">
    <property type="taxonomic scope" value="Bacteria"/>
</dbReference>
<dbReference type="HOGENOM" id="CLU_030556_0_1_6"/>
<dbReference type="OMA" id="HLSQRHF"/>
<dbReference type="OrthoDB" id="9810445at2"/>
<dbReference type="Proteomes" id="UP000000541">
    <property type="component" value="Chromosome"/>
</dbReference>
<dbReference type="Proteomes" id="UP000002670">
    <property type="component" value="Chromosome"/>
</dbReference>
<dbReference type="GO" id="GO:0016020">
    <property type="term" value="C:membrane"/>
    <property type="evidence" value="ECO:0007669"/>
    <property type="project" value="InterPro"/>
</dbReference>
<dbReference type="GO" id="GO:0042597">
    <property type="term" value="C:periplasmic space"/>
    <property type="evidence" value="ECO:0007669"/>
    <property type="project" value="UniProtKB-SubCell"/>
</dbReference>
<dbReference type="GO" id="GO:0004222">
    <property type="term" value="F:metalloendopeptidase activity"/>
    <property type="evidence" value="ECO:0007669"/>
    <property type="project" value="InterPro"/>
</dbReference>
<dbReference type="GO" id="GO:0008270">
    <property type="term" value="F:zinc ion binding"/>
    <property type="evidence" value="ECO:0007669"/>
    <property type="project" value="UniProtKB-UniRule"/>
</dbReference>
<dbReference type="GO" id="GO:0061077">
    <property type="term" value="P:chaperone-mediated protein folding"/>
    <property type="evidence" value="ECO:0007669"/>
    <property type="project" value="InterPro"/>
</dbReference>
<dbReference type="GO" id="GO:0051603">
    <property type="term" value="P:proteolysis involved in protein catabolic process"/>
    <property type="evidence" value="ECO:0007669"/>
    <property type="project" value="TreeGrafter"/>
</dbReference>
<dbReference type="CDD" id="cd07333">
    <property type="entry name" value="M48C_bepA_like"/>
    <property type="match status" value="1"/>
</dbReference>
<dbReference type="FunFam" id="3.30.2010.10:FF:000006">
    <property type="entry name" value="Beta-barrel assembly-enhancing protease"/>
    <property type="match status" value="1"/>
</dbReference>
<dbReference type="Gene3D" id="3.30.2010.10">
    <property type="entry name" value="Metalloproteases ('zincins'), catalytic domain"/>
    <property type="match status" value="1"/>
</dbReference>
<dbReference type="Gene3D" id="1.25.40.10">
    <property type="entry name" value="Tetratricopeptide repeat domain"/>
    <property type="match status" value="1"/>
</dbReference>
<dbReference type="HAMAP" id="MF_00997">
    <property type="entry name" value="Protease_BepA"/>
    <property type="match status" value="1"/>
</dbReference>
<dbReference type="InterPro" id="IPR051156">
    <property type="entry name" value="Mito/Outer_Membr_Metalloprot"/>
</dbReference>
<dbReference type="InterPro" id="IPR001915">
    <property type="entry name" value="Peptidase_M48"/>
</dbReference>
<dbReference type="InterPro" id="IPR030873">
    <property type="entry name" value="Protease_BepA"/>
</dbReference>
<dbReference type="InterPro" id="IPR011990">
    <property type="entry name" value="TPR-like_helical_dom_sf"/>
</dbReference>
<dbReference type="PANTHER" id="PTHR22726">
    <property type="entry name" value="METALLOENDOPEPTIDASE OMA1"/>
    <property type="match status" value="1"/>
</dbReference>
<dbReference type="PANTHER" id="PTHR22726:SF1">
    <property type="entry name" value="METALLOENDOPEPTIDASE OMA1, MITOCHONDRIAL"/>
    <property type="match status" value="1"/>
</dbReference>
<dbReference type="Pfam" id="PF01435">
    <property type="entry name" value="Peptidase_M48"/>
    <property type="match status" value="1"/>
</dbReference>
<dbReference type="Pfam" id="PF14559">
    <property type="entry name" value="TPR_19"/>
    <property type="match status" value="1"/>
</dbReference>
<dbReference type="SUPFAM" id="SSF48452">
    <property type="entry name" value="TPR-like"/>
    <property type="match status" value="1"/>
</dbReference>
<feature type="signal peptide" evidence="1">
    <location>
        <begin position="1"/>
        <end position="27"/>
    </location>
</feature>
<feature type="chain" id="PRO_0000035699" description="Beta-barrel assembly-enhancing protease">
    <location>
        <begin position="28"/>
        <end position="487"/>
    </location>
</feature>
<feature type="repeat" description="TPR 1">
    <location>
        <begin position="309"/>
        <end position="342"/>
    </location>
</feature>
<feature type="repeat" description="TPR 2">
    <location>
        <begin position="427"/>
        <end position="460"/>
    </location>
</feature>
<feature type="active site" evidence="1">
    <location>
        <position position="137"/>
    </location>
</feature>
<feature type="active site" description="Proton donor" evidence="1">
    <location>
        <position position="205"/>
    </location>
</feature>
<feature type="binding site" evidence="1">
    <location>
        <position position="136"/>
    </location>
    <ligand>
        <name>Zn(2+)</name>
        <dbReference type="ChEBI" id="CHEBI:29105"/>
        <note>catalytic</note>
    </ligand>
</feature>
<feature type="binding site" evidence="1">
    <location>
        <position position="140"/>
    </location>
    <ligand>
        <name>Zn(2+)</name>
        <dbReference type="ChEBI" id="CHEBI:29105"/>
        <note>catalytic</note>
    </ligand>
</feature>
<feature type="binding site" evidence="1">
    <location>
        <position position="201"/>
    </location>
    <ligand>
        <name>Zn(2+)</name>
        <dbReference type="ChEBI" id="CHEBI:29105"/>
        <note>catalytic</note>
    </ligand>
</feature>
<keyword id="KW-0378">Hydrolase</keyword>
<keyword id="KW-0479">Metal-binding</keyword>
<keyword id="KW-0482">Metalloprotease</keyword>
<keyword id="KW-0574">Periplasm</keyword>
<keyword id="KW-0645">Protease</keyword>
<keyword id="KW-0677">Repeat</keyword>
<keyword id="KW-0732">Signal</keyword>
<keyword id="KW-0802">TPR repeat</keyword>
<keyword id="KW-0862">Zinc</keyword>
<proteinExistence type="inferred from homology"/>
<gene>
    <name evidence="1" type="primary">bepA</name>
    <name type="synonym">yfgC</name>
    <name type="ordered locus">STY2735</name>
    <name type="ordered locus">t0363</name>
</gene>
<sequence length="487" mass="53741">MFRQLKKNLVATLIAALALGQVAPAFADPADTLPDMGTSAGSTLSIGQEMQMGDFYVRQLRGSAPLINDPLLVQYINALGMRLVSHADSVKTPFHFFLINNDEINAFAFFGGNVVLHSALFRYADNESQLASVMAHEISHVTQRHLARAMEDQKRSAPLTWVGALGSILLAMASPQAGMAALTGTLAGTRQGMISFTQQNEQEADRIGIQVLQRAGFDPQAMPSFLEKLLDQARYSTRPPEILLTHPLPESRLADARNRANQMRPVVVQSSADFYFAKARALGMYNSGRNQLTSDLLDQWSKGNVRQQHAAQYGRALQAMEASKYDEARKTLQPLLSAEPNNAWYLDLATDIDLGQKRANDAINRLKNARDLRVNPVLQLNLANAYLQGGQPKAAETILNRYTFSHKDDGNGWDLLAQAEAALNNRDQELAARAESYALAGRLDQAISLLSSASAQAKLGSQQQARYDARIDQLRQLQERFKPYTKM</sequence>
<comment type="function">
    <text evidence="1">Functions both as a chaperone and a metalloprotease. Maintains the integrity of the outer membrane by promoting either the assembly or the elimination of outer membrane proteins, depending on their folding state.</text>
</comment>
<comment type="cofactor">
    <cofactor evidence="1">
        <name>Zn(2+)</name>
        <dbReference type="ChEBI" id="CHEBI:29105"/>
    </cofactor>
    <text evidence="1">Binds 1 zinc ion per subunit.</text>
</comment>
<comment type="subcellular location">
    <subcellularLocation>
        <location evidence="1">Periplasm</location>
    </subcellularLocation>
</comment>
<comment type="similarity">
    <text evidence="1">Belongs to the peptidase M48 family. BepA subfamily.</text>
</comment>
<accession>P66951</accession>
<accession>Q8XG75</accession>
<protein>
    <recommendedName>
        <fullName evidence="1">Beta-barrel assembly-enhancing protease</fullName>
        <ecNumber evidence="1">3.4.-.-</ecNumber>
    </recommendedName>
</protein>
<organism>
    <name type="scientific">Salmonella typhi</name>
    <dbReference type="NCBI Taxonomy" id="90370"/>
    <lineage>
        <taxon>Bacteria</taxon>
        <taxon>Pseudomonadati</taxon>
        <taxon>Pseudomonadota</taxon>
        <taxon>Gammaproteobacteria</taxon>
        <taxon>Enterobacterales</taxon>
        <taxon>Enterobacteriaceae</taxon>
        <taxon>Salmonella</taxon>
    </lineage>
</organism>
<reference key="1">
    <citation type="journal article" date="2001" name="Nature">
        <title>Complete genome sequence of a multiple drug resistant Salmonella enterica serovar Typhi CT18.</title>
        <authorList>
            <person name="Parkhill J."/>
            <person name="Dougan G."/>
            <person name="James K.D."/>
            <person name="Thomson N.R."/>
            <person name="Pickard D."/>
            <person name="Wain J."/>
            <person name="Churcher C.M."/>
            <person name="Mungall K.L."/>
            <person name="Bentley S.D."/>
            <person name="Holden M.T.G."/>
            <person name="Sebaihia M."/>
            <person name="Baker S."/>
            <person name="Basham D."/>
            <person name="Brooks K."/>
            <person name="Chillingworth T."/>
            <person name="Connerton P."/>
            <person name="Cronin A."/>
            <person name="Davis P."/>
            <person name="Davies R.M."/>
            <person name="Dowd L."/>
            <person name="White N."/>
            <person name="Farrar J."/>
            <person name="Feltwell T."/>
            <person name="Hamlin N."/>
            <person name="Haque A."/>
            <person name="Hien T.T."/>
            <person name="Holroyd S."/>
            <person name="Jagels K."/>
            <person name="Krogh A."/>
            <person name="Larsen T.S."/>
            <person name="Leather S."/>
            <person name="Moule S."/>
            <person name="O'Gaora P."/>
            <person name="Parry C."/>
            <person name="Quail M.A."/>
            <person name="Rutherford K.M."/>
            <person name="Simmonds M."/>
            <person name="Skelton J."/>
            <person name="Stevens K."/>
            <person name="Whitehead S."/>
            <person name="Barrell B.G."/>
        </authorList>
    </citation>
    <scope>NUCLEOTIDE SEQUENCE [LARGE SCALE GENOMIC DNA]</scope>
    <source>
        <strain>CT18</strain>
    </source>
</reference>
<reference key="2">
    <citation type="journal article" date="2003" name="J. Bacteriol.">
        <title>Comparative genomics of Salmonella enterica serovar Typhi strains Ty2 and CT18.</title>
        <authorList>
            <person name="Deng W."/>
            <person name="Liou S.-R."/>
            <person name="Plunkett G. III"/>
            <person name="Mayhew G.F."/>
            <person name="Rose D.J."/>
            <person name="Burland V."/>
            <person name="Kodoyianni V."/>
            <person name="Schwartz D.C."/>
            <person name="Blattner F.R."/>
        </authorList>
    </citation>
    <scope>NUCLEOTIDE SEQUENCE [LARGE SCALE GENOMIC DNA]</scope>
    <source>
        <strain>ATCC 700931 / Ty2</strain>
    </source>
</reference>
<evidence type="ECO:0000255" key="1">
    <source>
        <dbReference type="HAMAP-Rule" id="MF_00997"/>
    </source>
</evidence>